<sequence>MAASVVKTPKCPRRGSVKDVAQNAPRTAPTSSKEANWNWWLLLATVFLVTFATRFYKVTEPDHICWDETHFGKMGSWYINRTFFFDVHPPLGKMLIGLSGYLTGYNGTFPFEKPGDKYNETRYQGMRYFCTTLGALIMPMGFDTVYDLTRSHEAALLAAAYLIFDVGLLTLNQYILLDPILLFFMMASVWGMVKVSKSTASGGSYGLRWWLWLFLTGTMLSCTISVKFVGLFVVLLVGLHTATELWLILGDLGQPILETVKQLACRAITLIVWPVLLYILFFYIHLSVLNRSGNGDGFYSSAFQSRLIGNSLYNASMPRDVAYGSLVTIKNHKTGGGYLHSHHHLYPKGSGARQQQVTTYTHKDENNKWLIRPHNKPGPPKGKVQILRHGDLVRLTHMATRRNLHSHNEPAPMTKKHLQVTGYGELGLGDANDVWRVLIVGGKVNETVHTVTSRLKFIHLLQNCALTSSGKQLPKWGFEQQEVSCNPNVRDKNSQWNVEDNEHKLMPSVSFSVYAPGFFARFLESHAVMLQGNAGLKPKEGEVTSRPWQWPINYRGQFFSGSSYRIYLLGNPLIWWSNLVFLALFVTVFLCNAVVQQRRAGFARSAAQNQAQVPDSETVAQDEESEHSTTDICSCCTPAKEIVPKAVPSGSPEAPNPAQSLRAAAWLFLGWMLHYLPFWAMGRVLYFHHYFPALIFNSLLTGVMYNYILRVLPKWIHHVILGLVLSILVYSFAAFSPLAYGMSGPLANEPNSTMYNLKWLSTWEF</sequence>
<feature type="chain" id="PRO_0000121490" description="Protein O-mannosyl-transferase 2">
    <location>
        <begin position="1"/>
        <end position="765"/>
    </location>
</feature>
<feature type="transmembrane region" description="Helical" evidence="1">
    <location>
        <begin position="35"/>
        <end position="55"/>
    </location>
</feature>
<feature type="transmembrane region" description="Helical" evidence="1">
    <location>
        <begin position="128"/>
        <end position="148"/>
    </location>
</feature>
<feature type="transmembrane region" description="Helical" evidence="1">
    <location>
        <begin position="175"/>
        <end position="195"/>
    </location>
</feature>
<feature type="transmembrane region" description="Helical" evidence="1">
    <location>
        <begin position="206"/>
        <end position="226"/>
    </location>
</feature>
<feature type="transmembrane region" description="Helical" evidence="1">
    <location>
        <begin position="228"/>
        <end position="248"/>
    </location>
</feature>
<feature type="transmembrane region" description="Helical" evidence="1">
    <location>
        <begin position="268"/>
        <end position="288"/>
    </location>
</feature>
<feature type="transmembrane region" description="Helical" evidence="1">
    <location>
        <begin position="566"/>
        <end position="586"/>
    </location>
</feature>
<feature type="transmembrane region" description="Helical" evidence="1">
    <location>
        <begin position="667"/>
        <end position="687"/>
    </location>
</feature>
<feature type="transmembrane region" description="Helical" evidence="1">
    <location>
        <begin position="689"/>
        <end position="709"/>
    </location>
</feature>
<feature type="transmembrane region" description="Helical" evidence="1">
    <location>
        <begin position="719"/>
        <end position="739"/>
    </location>
</feature>
<feature type="domain" description="MIR 1" evidence="2">
    <location>
        <begin position="318"/>
        <end position="374"/>
    </location>
</feature>
<feature type="domain" description="MIR 2" evidence="2">
    <location>
        <begin position="384"/>
        <end position="440"/>
    </location>
</feature>
<feature type="domain" description="MIR 3" evidence="2">
    <location>
        <begin position="445"/>
        <end position="501"/>
    </location>
</feature>
<feature type="region of interest" description="Disordered" evidence="3">
    <location>
        <begin position="1"/>
        <end position="31"/>
    </location>
</feature>
<feature type="glycosylation site" description="N-linked (GlcNAc...) asparagine" evidence="1">
    <location>
        <position position="80"/>
    </location>
</feature>
<feature type="glycosylation site" description="N-linked (GlcNAc...) asparagine" evidence="1">
    <location>
        <position position="106"/>
    </location>
</feature>
<feature type="glycosylation site" description="N-linked (GlcNAc...) asparagine" evidence="1">
    <location>
        <position position="119"/>
    </location>
</feature>
<feature type="glycosylation site" description="N-linked (GlcNAc...) asparagine" evidence="1">
    <location>
        <position position="290"/>
    </location>
</feature>
<feature type="glycosylation site" description="N-linked (GlcNAc...) asparagine" evidence="1">
    <location>
        <position position="314"/>
    </location>
</feature>
<feature type="glycosylation site" description="N-linked (GlcNAc...) asparagine" evidence="1">
    <location>
        <position position="445"/>
    </location>
</feature>
<feature type="glycosylation site" description="N-linked (GlcNAc...) asparagine" evidence="1">
    <location>
        <position position="751"/>
    </location>
</feature>
<feature type="sequence variant" description="In allele tw[1].">
    <original>T</original>
    <variation>GS</variation>
    <location>
        <position position="59"/>
    </location>
</feature>
<protein>
    <recommendedName>
        <fullName>Protein O-mannosyl-transferase 2</fullName>
        <ecNumber>2.4.1.109</ecNumber>
    </recommendedName>
    <alternativeName>
        <fullName>Dolichyl-phosphate-mannose--protein mannosyltransferase 2</fullName>
        <shortName>DmPOMT2</shortName>
        <shortName>dPOMT2</shortName>
    </alternativeName>
    <alternativeName>
        <fullName>Protein twisted</fullName>
    </alternativeName>
</protein>
<gene>
    <name type="primary">tw</name>
    <name type="synonym">Pomt2</name>
    <name type="ORF">CG12311</name>
</gene>
<dbReference type="EC" id="2.4.1.109"/>
<dbReference type="EMBL" id="AB176551">
    <property type="protein sequence ID" value="BAD54755.1"/>
    <property type="molecule type" value="mRNA"/>
</dbReference>
<dbReference type="EMBL" id="AE014298">
    <property type="protein sequence ID" value="AAF45548.1"/>
    <property type="molecule type" value="Genomic_DNA"/>
</dbReference>
<dbReference type="EMBL" id="AL031583">
    <property type="protein sequence ID" value="CAA20897.1"/>
    <property type="status" value="ALT_SEQ"/>
    <property type="molecule type" value="Genomic_DNA"/>
</dbReference>
<dbReference type="EMBL" id="AY095525">
    <property type="protein sequence ID" value="AAM12256.1"/>
    <property type="molecule type" value="mRNA"/>
</dbReference>
<dbReference type="PIR" id="T13483">
    <property type="entry name" value="T13483"/>
</dbReference>
<dbReference type="RefSeq" id="NP_001259102.1">
    <property type="nucleotide sequence ID" value="NM_001272173.1"/>
</dbReference>
<dbReference type="RefSeq" id="NP_569858.1">
    <property type="nucleotide sequence ID" value="NM_130502.3"/>
</dbReference>
<dbReference type="SMR" id="Q9W5D4"/>
<dbReference type="BioGRID" id="57592">
    <property type="interactions" value="2"/>
</dbReference>
<dbReference type="ComplexPortal" id="CPX-2372">
    <property type="entry name" value="POMT1-POMT2 O-mannosyltransferase complex"/>
</dbReference>
<dbReference type="FunCoup" id="Q9W5D4">
    <property type="interactions" value="521"/>
</dbReference>
<dbReference type="STRING" id="7227.FBpp0307386"/>
<dbReference type="CAZy" id="GT39">
    <property type="family name" value="Glycosyltransferase Family 39"/>
</dbReference>
<dbReference type="GlyCosmos" id="Q9W5D4">
    <property type="glycosylation" value="7 sites, No reported glycans"/>
</dbReference>
<dbReference type="GlyGen" id="Q9W5D4">
    <property type="glycosylation" value="7 sites"/>
</dbReference>
<dbReference type="PaxDb" id="7227-FBpp0070134"/>
<dbReference type="EnsemblMetazoa" id="FBtr0070139">
    <property type="protein sequence ID" value="FBpp0070134"/>
    <property type="gene ID" value="FBgn0086368"/>
</dbReference>
<dbReference type="EnsemblMetazoa" id="FBtr0335403">
    <property type="protein sequence ID" value="FBpp0307386"/>
    <property type="gene ID" value="FBgn0086368"/>
</dbReference>
<dbReference type="GeneID" id="31024"/>
<dbReference type="KEGG" id="dme:Dmel_CG12311"/>
<dbReference type="AGR" id="FB:FBgn0086368"/>
<dbReference type="CTD" id="8168"/>
<dbReference type="FlyBase" id="FBgn0086368">
    <property type="gene designation" value="tw"/>
</dbReference>
<dbReference type="VEuPathDB" id="VectorBase:FBgn0086368"/>
<dbReference type="eggNOG" id="KOG3359">
    <property type="taxonomic scope" value="Eukaryota"/>
</dbReference>
<dbReference type="GeneTree" id="ENSGT00940000156829"/>
<dbReference type="HOGENOM" id="CLU_008438_5_0_1"/>
<dbReference type="InParanoid" id="Q9W5D4"/>
<dbReference type="OMA" id="MCGWDDN"/>
<dbReference type="OrthoDB" id="5561486at2759"/>
<dbReference type="PhylomeDB" id="Q9W5D4"/>
<dbReference type="Reactome" id="R-DME-5173105">
    <property type="pathway name" value="O-linked glycosylation"/>
</dbReference>
<dbReference type="UniPathway" id="UPA00378"/>
<dbReference type="BioGRID-ORCS" id="31024">
    <property type="hits" value="0 hits in 1 CRISPR screen"/>
</dbReference>
<dbReference type="ChiTaRS" id="tws">
    <property type="organism name" value="fly"/>
</dbReference>
<dbReference type="GenomeRNAi" id="31024"/>
<dbReference type="PRO" id="PR:Q9W5D4"/>
<dbReference type="Proteomes" id="UP000000803">
    <property type="component" value="Chromosome X"/>
</dbReference>
<dbReference type="Bgee" id="FBgn0086368">
    <property type="expression patterns" value="Expressed in eye disc (Drosophila) and 24 other cell types or tissues"/>
</dbReference>
<dbReference type="ExpressionAtlas" id="Q9W5D4">
    <property type="expression patterns" value="baseline and differential"/>
</dbReference>
<dbReference type="GO" id="GO:0031502">
    <property type="term" value="C:dolichyl-phosphate-mannose-protein mannosyltransferase complex"/>
    <property type="evidence" value="ECO:0000314"/>
    <property type="project" value="FlyBase"/>
</dbReference>
<dbReference type="GO" id="GO:0005783">
    <property type="term" value="C:endoplasmic reticulum"/>
    <property type="evidence" value="ECO:0000314"/>
    <property type="project" value="UniProtKB"/>
</dbReference>
<dbReference type="GO" id="GO:0005789">
    <property type="term" value="C:endoplasmic reticulum membrane"/>
    <property type="evidence" value="ECO:0000314"/>
    <property type="project" value="FlyBase"/>
</dbReference>
<dbReference type="GO" id="GO:0004169">
    <property type="term" value="F:dolichyl-phosphate-mannose-protein mannosyltransferase activity"/>
    <property type="evidence" value="ECO:0000314"/>
    <property type="project" value="UniProtKB"/>
</dbReference>
<dbReference type="GO" id="GO:0016203">
    <property type="term" value="P:muscle attachment"/>
    <property type="evidence" value="ECO:0000316"/>
    <property type="project" value="FlyBase"/>
</dbReference>
<dbReference type="GO" id="GO:0007517">
    <property type="term" value="P:muscle organ development"/>
    <property type="evidence" value="ECO:0000315"/>
    <property type="project" value="UniProtKB"/>
</dbReference>
<dbReference type="GO" id="GO:0035269">
    <property type="term" value="P:protein O-linked mannosylation"/>
    <property type="evidence" value="ECO:0000314"/>
    <property type="project" value="FlyBase"/>
</dbReference>
<dbReference type="GO" id="GO:0045214">
    <property type="term" value="P:sarcomere organization"/>
    <property type="evidence" value="ECO:0000316"/>
    <property type="project" value="FlyBase"/>
</dbReference>
<dbReference type="GO" id="GO:0007525">
    <property type="term" value="P:somatic muscle development"/>
    <property type="evidence" value="ECO:0000315"/>
    <property type="project" value="FlyBase"/>
</dbReference>
<dbReference type="CDD" id="cd23282">
    <property type="entry name" value="beta-trefoil_MIR_POMT2"/>
    <property type="match status" value="1"/>
</dbReference>
<dbReference type="FunFam" id="2.80.10.50:FF:000026">
    <property type="entry name" value="Blast:Protein O-mannosyl-transferase 2"/>
    <property type="match status" value="1"/>
</dbReference>
<dbReference type="Gene3D" id="2.80.10.50">
    <property type="match status" value="1"/>
</dbReference>
<dbReference type="InterPro" id="IPR027005">
    <property type="entry name" value="GlyclTrfase_39-like"/>
</dbReference>
<dbReference type="InterPro" id="IPR003342">
    <property type="entry name" value="Glyco_trans_39/83"/>
</dbReference>
<dbReference type="InterPro" id="IPR036300">
    <property type="entry name" value="MIR_dom_sf"/>
</dbReference>
<dbReference type="InterPro" id="IPR016093">
    <property type="entry name" value="MIR_motif"/>
</dbReference>
<dbReference type="InterPro" id="IPR032421">
    <property type="entry name" value="PMT_4TMC"/>
</dbReference>
<dbReference type="PANTHER" id="PTHR10050">
    <property type="entry name" value="DOLICHYL-PHOSPHATE-MANNOSE--PROTEIN MANNOSYLTRANSFERASE"/>
    <property type="match status" value="1"/>
</dbReference>
<dbReference type="PANTHER" id="PTHR10050:SF46">
    <property type="entry name" value="PROTEIN O-MANNOSYL-TRANSFERASE 2"/>
    <property type="match status" value="1"/>
</dbReference>
<dbReference type="Pfam" id="PF02815">
    <property type="entry name" value="MIR"/>
    <property type="match status" value="1"/>
</dbReference>
<dbReference type="Pfam" id="PF02366">
    <property type="entry name" value="PMT"/>
    <property type="match status" value="1"/>
</dbReference>
<dbReference type="Pfam" id="PF16192">
    <property type="entry name" value="PMT_4TMC"/>
    <property type="match status" value="2"/>
</dbReference>
<dbReference type="SMART" id="SM00472">
    <property type="entry name" value="MIR"/>
    <property type="match status" value="3"/>
</dbReference>
<dbReference type="SUPFAM" id="SSF82109">
    <property type="entry name" value="MIR domain"/>
    <property type="match status" value="1"/>
</dbReference>
<dbReference type="PROSITE" id="PS50919">
    <property type="entry name" value="MIR"/>
    <property type="match status" value="3"/>
</dbReference>
<organism>
    <name type="scientific">Drosophila melanogaster</name>
    <name type="common">Fruit fly</name>
    <dbReference type="NCBI Taxonomy" id="7227"/>
    <lineage>
        <taxon>Eukaryota</taxon>
        <taxon>Metazoa</taxon>
        <taxon>Ecdysozoa</taxon>
        <taxon>Arthropoda</taxon>
        <taxon>Hexapoda</taxon>
        <taxon>Insecta</taxon>
        <taxon>Pterygota</taxon>
        <taxon>Neoptera</taxon>
        <taxon>Endopterygota</taxon>
        <taxon>Diptera</taxon>
        <taxon>Brachycera</taxon>
        <taxon>Muscomorpha</taxon>
        <taxon>Ephydroidea</taxon>
        <taxon>Drosophilidae</taxon>
        <taxon>Drosophila</taxon>
        <taxon>Sophophora</taxon>
    </lineage>
</organism>
<evidence type="ECO:0000255" key="1"/>
<evidence type="ECO:0000255" key="2">
    <source>
        <dbReference type="PROSITE-ProRule" id="PRU00131"/>
    </source>
</evidence>
<evidence type="ECO:0000256" key="3">
    <source>
        <dbReference type="SAM" id="MobiDB-lite"/>
    </source>
</evidence>
<evidence type="ECO:0000269" key="4">
    <source>
    </source>
</evidence>
<evidence type="ECO:0000269" key="5">
    <source>
    </source>
</evidence>
<evidence type="ECO:0000269" key="6">
    <source>
    </source>
</evidence>
<evidence type="ECO:0000269" key="7">
    <source>
    </source>
</evidence>
<evidence type="ECO:0000269" key="8">
    <source>
    </source>
</evidence>
<evidence type="ECO:0000305" key="9"/>
<evidence type="ECO:0000312" key="10">
    <source>
        <dbReference type="EMBL" id="AAF45548.1"/>
    </source>
</evidence>
<evidence type="ECO:0000312" key="11">
    <source>
        <dbReference type="EMBL" id="AAM12256.1"/>
    </source>
</evidence>
<evidence type="ECO:0000312" key="12">
    <source>
        <dbReference type="EMBL" id="BAD54755.1"/>
    </source>
</evidence>
<evidence type="ECO:0000312" key="13">
    <source>
        <dbReference type="EMBL" id="CAA20897.1"/>
    </source>
</evidence>
<proteinExistence type="evidence at transcript level"/>
<accession>Q9W5D4</accession>
<accession>O77437</accession>
<comment type="function">
    <text evidence="7 8">Rt/POMT1 and tw/POMT2 function as a protein O-mannosyltransferase in association with each other to generate and maintain normal muscle development.</text>
</comment>
<comment type="catalytic activity">
    <reaction>
        <text>a di-trans,poly-cis-dolichyl beta-D-mannosyl phosphate + L-seryl-[protein] = 3-O-(alpha-D-mannosyl)-L-seryl-[protein] + a di-trans,poly-cis-dolichyl phosphate + H(+)</text>
        <dbReference type="Rhea" id="RHEA:17377"/>
        <dbReference type="Rhea" id="RHEA-COMP:9863"/>
        <dbReference type="Rhea" id="RHEA-COMP:13546"/>
        <dbReference type="Rhea" id="RHEA-COMP:19498"/>
        <dbReference type="Rhea" id="RHEA-COMP:19501"/>
        <dbReference type="ChEBI" id="CHEBI:15378"/>
        <dbReference type="ChEBI" id="CHEBI:29999"/>
        <dbReference type="ChEBI" id="CHEBI:57683"/>
        <dbReference type="ChEBI" id="CHEBI:58211"/>
        <dbReference type="ChEBI" id="CHEBI:137321"/>
        <dbReference type="EC" id="2.4.1.109"/>
    </reaction>
</comment>
<comment type="catalytic activity">
    <reaction>
        <text>a di-trans,poly-cis-dolichyl beta-D-mannosyl phosphate + L-threonyl-[protein] = 3-O-(alpha-D-mannosyl)-L-threonyl-[protein] + a di-trans,poly-cis-dolichyl phosphate + H(+)</text>
        <dbReference type="Rhea" id="RHEA:53396"/>
        <dbReference type="Rhea" id="RHEA-COMP:11060"/>
        <dbReference type="Rhea" id="RHEA-COMP:13547"/>
        <dbReference type="Rhea" id="RHEA-COMP:19498"/>
        <dbReference type="Rhea" id="RHEA-COMP:19501"/>
        <dbReference type="ChEBI" id="CHEBI:15378"/>
        <dbReference type="ChEBI" id="CHEBI:30013"/>
        <dbReference type="ChEBI" id="CHEBI:57683"/>
        <dbReference type="ChEBI" id="CHEBI:58211"/>
        <dbReference type="ChEBI" id="CHEBI:137323"/>
        <dbReference type="EC" id="2.4.1.109"/>
    </reaction>
</comment>
<comment type="pathway">
    <text>Protein modification; protein glycosylation.</text>
</comment>
<comment type="subunit">
    <text evidence="9">Interacts with Rt/POMT1.</text>
</comment>
<comment type="subcellular location">
    <subcellularLocation>
        <location evidence="8">Endoplasmic reticulum membrane</location>
        <topology evidence="8">Multi-pass membrane protein</topology>
    </subcellularLocation>
</comment>
<comment type="tissue specificity">
    <text evidence="7">At the cellular blastoderm stage, expression accumulates in the ventrally located mesoderm primordium. At germ band extension, mesoderm expression is seen as stripes of strong expression. A very strong signal is also detected in the invaginating gut. As the germ band retracts, mesodermal expression decays and becomes restricted to somatic muscle precursors.</text>
</comment>
<comment type="developmental stage">
    <text evidence="7 8">Expressed throughout development; expression peaks at embryonic stages 8-16.</text>
</comment>
<comment type="disruption phenotype">
    <text evidence="7">Death during development, the few adult escapers exhibit clockwise rotation of the abdomen.</text>
</comment>
<comment type="similarity">
    <text evidence="1">Belongs to the glycosyltransferase 39 family.</text>
</comment>
<comment type="sequence caution" evidence="9">
    <conflict type="erroneous gene model prediction">
        <sequence resource="EMBL-CDS" id="CAA20897"/>
    </conflict>
</comment>
<reference evidence="9 12" key="1">
    <citation type="journal article" date="2004" name="J. Biol. Chem.">
        <title>The twisted abdomen phenotype of Drosophila POMT1 and POMT2 mutants coincides with their heterophilic protein O-mannosyltransferase activity.</title>
        <authorList>
            <person name="Ichimiya T."/>
            <person name="Manya H."/>
            <person name="Ohmae Y."/>
            <person name="Yoshida H."/>
            <person name="Takahashi K."/>
            <person name="Ueda R."/>
            <person name="Endo T."/>
            <person name="Nishihara S."/>
        </authorList>
    </citation>
    <scope>NUCLEOTIDE SEQUENCE [MRNA]</scope>
    <scope>FUNCTION</scope>
    <scope>TISSUE SPECIFICITY</scope>
    <scope>DEVELOPMENTAL STAGE</scope>
    <scope>DISRUPTION PHENOTYPE</scope>
</reference>
<reference key="2">
    <citation type="journal article" date="2006" name="Genetics">
        <title>The twisted gene encodes Drosophila protein O-mannosyltransferase 2 and genetically interacts with the rotated abdomen gene encoding Drosophila protein O-mannosyltransferase 1.</title>
        <authorList>
            <person name="Lyalin D."/>
            <person name="Koles K."/>
            <person name="Roosendaal S.D."/>
            <person name="Repnikova E."/>
            <person name="Van Wechel L."/>
            <person name="Panin V.M."/>
        </authorList>
    </citation>
    <scope>NUCLEOTIDE SEQUENCE [GENOMIC DNA] (ALLELE TW[1])</scope>
    <scope>FUNCTION</scope>
    <scope>SUBCELLULAR LOCATION</scope>
    <scope>DEVELOPMENTAL STAGE</scope>
</reference>
<reference evidence="10" key="3">
    <citation type="journal article" date="2000" name="Science">
        <title>The genome sequence of Drosophila melanogaster.</title>
        <authorList>
            <person name="Adams M.D."/>
            <person name="Celniker S.E."/>
            <person name="Holt R.A."/>
            <person name="Evans C.A."/>
            <person name="Gocayne J.D."/>
            <person name="Amanatides P.G."/>
            <person name="Scherer S.E."/>
            <person name="Li P.W."/>
            <person name="Hoskins R.A."/>
            <person name="Galle R.F."/>
            <person name="George R.A."/>
            <person name="Lewis S.E."/>
            <person name="Richards S."/>
            <person name="Ashburner M."/>
            <person name="Henderson S.N."/>
            <person name="Sutton G.G."/>
            <person name="Wortman J.R."/>
            <person name="Yandell M.D."/>
            <person name="Zhang Q."/>
            <person name="Chen L.X."/>
            <person name="Brandon R.C."/>
            <person name="Rogers Y.-H.C."/>
            <person name="Blazej R.G."/>
            <person name="Champe M."/>
            <person name="Pfeiffer B.D."/>
            <person name="Wan K.H."/>
            <person name="Doyle C."/>
            <person name="Baxter E.G."/>
            <person name="Helt G."/>
            <person name="Nelson C.R."/>
            <person name="Miklos G.L.G."/>
            <person name="Abril J.F."/>
            <person name="Agbayani A."/>
            <person name="An H.-J."/>
            <person name="Andrews-Pfannkoch C."/>
            <person name="Baldwin D."/>
            <person name="Ballew R.M."/>
            <person name="Basu A."/>
            <person name="Baxendale J."/>
            <person name="Bayraktaroglu L."/>
            <person name="Beasley E.M."/>
            <person name="Beeson K.Y."/>
            <person name="Benos P.V."/>
            <person name="Berman B.P."/>
            <person name="Bhandari D."/>
            <person name="Bolshakov S."/>
            <person name="Borkova D."/>
            <person name="Botchan M.R."/>
            <person name="Bouck J."/>
            <person name="Brokstein P."/>
            <person name="Brottier P."/>
            <person name="Burtis K.C."/>
            <person name="Busam D.A."/>
            <person name="Butler H."/>
            <person name="Cadieu E."/>
            <person name="Center A."/>
            <person name="Chandra I."/>
            <person name="Cherry J.M."/>
            <person name="Cawley S."/>
            <person name="Dahlke C."/>
            <person name="Davenport L.B."/>
            <person name="Davies P."/>
            <person name="de Pablos B."/>
            <person name="Delcher A."/>
            <person name="Deng Z."/>
            <person name="Mays A.D."/>
            <person name="Dew I."/>
            <person name="Dietz S.M."/>
            <person name="Dodson K."/>
            <person name="Doup L.E."/>
            <person name="Downes M."/>
            <person name="Dugan-Rocha S."/>
            <person name="Dunkov B.C."/>
            <person name="Dunn P."/>
            <person name="Durbin K.J."/>
            <person name="Evangelista C.C."/>
            <person name="Ferraz C."/>
            <person name="Ferriera S."/>
            <person name="Fleischmann W."/>
            <person name="Fosler C."/>
            <person name="Gabrielian A.E."/>
            <person name="Garg N.S."/>
            <person name="Gelbart W.M."/>
            <person name="Glasser K."/>
            <person name="Glodek A."/>
            <person name="Gong F."/>
            <person name="Gorrell J.H."/>
            <person name="Gu Z."/>
            <person name="Guan P."/>
            <person name="Harris M."/>
            <person name="Harris N.L."/>
            <person name="Harvey D.A."/>
            <person name="Heiman T.J."/>
            <person name="Hernandez J.R."/>
            <person name="Houck J."/>
            <person name="Hostin D."/>
            <person name="Houston K.A."/>
            <person name="Howland T.J."/>
            <person name="Wei M.-H."/>
            <person name="Ibegwam C."/>
            <person name="Jalali M."/>
            <person name="Kalush F."/>
            <person name="Karpen G.H."/>
            <person name="Ke Z."/>
            <person name="Kennison J.A."/>
            <person name="Ketchum K.A."/>
            <person name="Kimmel B.E."/>
            <person name="Kodira C.D."/>
            <person name="Kraft C.L."/>
            <person name="Kravitz S."/>
            <person name="Kulp D."/>
            <person name="Lai Z."/>
            <person name="Lasko P."/>
            <person name="Lei Y."/>
            <person name="Levitsky A.A."/>
            <person name="Li J.H."/>
            <person name="Li Z."/>
            <person name="Liang Y."/>
            <person name="Lin X."/>
            <person name="Liu X."/>
            <person name="Mattei B."/>
            <person name="McIntosh T.C."/>
            <person name="McLeod M.P."/>
            <person name="McPherson D."/>
            <person name="Merkulov G."/>
            <person name="Milshina N.V."/>
            <person name="Mobarry C."/>
            <person name="Morris J."/>
            <person name="Moshrefi A."/>
            <person name="Mount S.M."/>
            <person name="Moy M."/>
            <person name="Murphy B."/>
            <person name="Murphy L."/>
            <person name="Muzny D.M."/>
            <person name="Nelson D.L."/>
            <person name="Nelson D.R."/>
            <person name="Nelson K.A."/>
            <person name="Nixon K."/>
            <person name="Nusskern D.R."/>
            <person name="Pacleb J.M."/>
            <person name="Palazzolo M."/>
            <person name="Pittman G.S."/>
            <person name="Pan S."/>
            <person name="Pollard J."/>
            <person name="Puri V."/>
            <person name="Reese M.G."/>
            <person name="Reinert K."/>
            <person name="Remington K."/>
            <person name="Saunders R.D.C."/>
            <person name="Scheeler F."/>
            <person name="Shen H."/>
            <person name="Shue B.C."/>
            <person name="Siden-Kiamos I."/>
            <person name="Simpson M."/>
            <person name="Skupski M.P."/>
            <person name="Smith T.J."/>
            <person name="Spier E."/>
            <person name="Spradling A.C."/>
            <person name="Stapleton M."/>
            <person name="Strong R."/>
            <person name="Sun E."/>
            <person name="Svirskas R."/>
            <person name="Tector C."/>
            <person name="Turner R."/>
            <person name="Venter E."/>
            <person name="Wang A.H."/>
            <person name="Wang X."/>
            <person name="Wang Z.-Y."/>
            <person name="Wassarman D.A."/>
            <person name="Weinstock G.M."/>
            <person name="Weissenbach J."/>
            <person name="Williams S.M."/>
            <person name="Woodage T."/>
            <person name="Worley K.C."/>
            <person name="Wu D."/>
            <person name="Yang S."/>
            <person name="Yao Q.A."/>
            <person name="Ye J."/>
            <person name="Yeh R.-F."/>
            <person name="Zaveri J.S."/>
            <person name="Zhan M."/>
            <person name="Zhang G."/>
            <person name="Zhao Q."/>
            <person name="Zheng L."/>
            <person name="Zheng X.H."/>
            <person name="Zhong F.N."/>
            <person name="Zhong W."/>
            <person name="Zhou X."/>
            <person name="Zhu S.C."/>
            <person name="Zhu X."/>
            <person name="Smith H.O."/>
            <person name="Gibbs R.A."/>
            <person name="Myers E.W."/>
            <person name="Rubin G.M."/>
            <person name="Venter J.C."/>
        </authorList>
    </citation>
    <scope>NUCLEOTIDE SEQUENCE [LARGE SCALE GENOMIC DNA]</scope>
    <source>
        <strain evidence="4">Berkeley</strain>
    </source>
</reference>
<reference evidence="9 10" key="4">
    <citation type="journal article" date="2002" name="Genome Biol.">
        <title>Annotation of the Drosophila melanogaster euchromatic genome: a systematic review.</title>
        <authorList>
            <person name="Misra S."/>
            <person name="Crosby M.A."/>
            <person name="Mungall C.J."/>
            <person name="Matthews B.B."/>
            <person name="Campbell K.S."/>
            <person name="Hradecky P."/>
            <person name="Huang Y."/>
            <person name="Kaminker J.S."/>
            <person name="Millburn G.H."/>
            <person name="Prochnik S.E."/>
            <person name="Smith C.D."/>
            <person name="Tupy J.L."/>
            <person name="Whitfield E.J."/>
            <person name="Bayraktaroglu L."/>
            <person name="Berman B.P."/>
            <person name="Bettencourt B.R."/>
            <person name="Celniker S.E."/>
            <person name="de Grey A.D.N.J."/>
            <person name="Drysdale R.A."/>
            <person name="Harris N.L."/>
            <person name="Richter J."/>
            <person name="Russo S."/>
            <person name="Schroeder A.J."/>
            <person name="Shu S.Q."/>
            <person name="Stapleton M."/>
            <person name="Yamada C."/>
            <person name="Ashburner M."/>
            <person name="Gelbart W.M."/>
            <person name="Rubin G.M."/>
            <person name="Lewis S.E."/>
        </authorList>
    </citation>
    <scope>GENOME REANNOTATION</scope>
    <source>
        <strain>Berkeley</strain>
    </source>
</reference>
<reference evidence="13" key="5">
    <citation type="journal article" date="2000" name="Science">
        <title>From sequence to chromosome: the tip of the X chromosome of D. melanogaster.</title>
        <authorList>
            <person name="Benos P.V."/>
            <person name="Gatt M.K."/>
            <person name="Ashburner M."/>
            <person name="Murphy L."/>
            <person name="Harris D."/>
            <person name="Barrell B.G."/>
            <person name="Ferraz C."/>
            <person name="Vidal S."/>
            <person name="Brun C."/>
            <person name="Demailles J."/>
            <person name="Cadieu E."/>
            <person name="Dreano S."/>
            <person name="Gloux S."/>
            <person name="Lelaure V."/>
            <person name="Mottier S."/>
            <person name="Galibert F."/>
            <person name="Borkova D."/>
            <person name="Minana B."/>
            <person name="Kafatos F.C."/>
            <person name="Louis C."/>
            <person name="Siden-Kiamos I."/>
            <person name="Bolshakov S."/>
            <person name="Papagiannakis G."/>
            <person name="Spanos L."/>
            <person name="Cox S."/>
            <person name="Madueno E."/>
            <person name="de Pablos B."/>
            <person name="Modolell J."/>
            <person name="Peter A."/>
            <person name="Schoettler P."/>
            <person name="Werner M."/>
            <person name="Mourkioti F."/>
            <person name="Beinert N."/>
            <person name="Dowe G."/>
            <person name="Schaefer U."/>
            <person name="Jaeckle H."/>
            <person name="Bucheton A."/>
            <person name="Callister D.M."/>
            <person name="Campbell L.A."/>
            <person name="Darlamitsou A."/>
            <person name="Henderson N.S."/>
            <person name="McMillan P.J."/>
            <person name="Salles C."/>
            <person name="Tait E.A."/>
            <person name="Valenti P."/>
            <person name="Saunders R.D.C."/>
            <person name="Glover D.M."/>
        </authorList>
    </citation>
    <scope>NUCLEOTIDE SEQUENCE [LARGE SCALE GENOMIC DNA]</scope>
    <source>
        <strain evidence="5">Oregon-R</strain>
    </source>
</reference>
<reference evidence="11" key="6">
    <citation type="journal article" date="2002" name="Genome Biol.">
        <title>A Drosophila full-length cDNA resource.</title>
        <authorList>
            <person name="Stapleton M."/>
            <person name="Carlson J.W."/>
            <person name="Brokstein P."/>
            <person name="Yu C."/>
            <person name="Champe M."/>
            <person name="George R.A."/>
            <person name="Guarin H."/>
            <person name="Kronmiller B."/>
            <person name="Pacleb J.M."/>
            <person name="Park S."/>
            <person name="Wan K.H."/>
            <person name="Rubin G.M."/>
            <person name="Celniker S.E."/>
        </authorList>
    </citation>
    <scope>NUCLEOTIDE SEQUENCE [LARGE SCALE MRNA]</scope>
    <source>
        <strain evidence="11">Berkeley</strain>
        <tissue evidence="6">Larva</tissue>
        <tissue evidence="6">Pupae</tissue>
    </source>
</reference>
<keyword id="KW-0217">Developmental protein</keyword>
<keyword id="KW-0256">Endoplasmic reticulum</keyword>
<keyword id="KW-0325">Glycoprotein</keyword>
<keyword id="KW-0328">Glycosyltransferase</keyword>
<keyword id="KW-0472">Membrane</keyword>
<keyword id="KW-1185">Reference proteome</keyword>
<keyword id="KW-0677">Repeat</keyword>
<keyword id="KW-0808">Transferase</keyword>
<keyword id="KW-0812">Transmembrane</keyword>
<keyword id="KW-1133">Transmembrane helix</keyword>
<name>POMT2_DROME</name>